<feature type="chain" id="PRO_0000183912" description="Cytochrome bo(3) ubiquinol oxidase subunit 4">
    <location>
        <begin position="1"/>
        <end position="109"/>
    </location>
</feature>
<feature type="topological domain" description="Cytoplasmic" evidence="2">
    <location>
        <begin position="1"/>
        <end position="17"/>
    </location>
</feature>
<feature type="transmembrane region" description="Helical" evidence="2">
    <location>
        <begin position="18"/>
        <end position="36"/>
    </location>
</feature>
<feature type="topological domain" description="Periplasmic" evidence="2">
    <location>
        <begin position="37"/>
        <end position="45"/>
    </location>
</feature>
<feature type="transmembrane region" description="Helical" evidence="2">
    <location>
        <begin position="46"/>
        <end position="64"/>
    </location>
</feature>
<feature type="topological domain" description="Cytoplasmic" evidence="2">
    <location>
        <begin position="65"/>
        <end position="80"/>
    </location>
</feature>
<feature type="transmembrane region" description="Helical" evidence="2">
    <location>
        <begin position="81"/>
        <end position="99"/>
    </location>
</feature>
<feature type="topological domain" description="Periplasmic" evidence="2">
    <location>
        <begin position="100"/>
        <end position="109"/>
    </location>
</feature>
<sequence length="109" mass="12029">MSHSTDHSGASHGSVKTYMTGFILSIILTVIPFWMVMTGAASPAVILGTILAMAVVQVLVHLVCFLHMNTKSDEGWNMTAFVFTVLIIAILVVGSIWIMWNLNYNMMMH</sequence>
<dbReference type="EMBL" id="AE005674">
    <property type="protein sequence ID" value="AAN42028.1"/>
    <property type="molecule type" value="Genomic_DNA"/>
</dbReference>
<dbReference type="EMBL" id="AE014073">
    <property type="protein sequence ID" value="AAP15905.1"/>
    <property type="molecule type" value="Genomic_DNA"/>
</dbReference>
<dbReference type="RefSeq" id="NP_706321.1">
    <property type="nucleotide sequence ID" value="NC_004337.2"/>
</dbReference>
<dbReference type="RefSeq" id="WP_000019869.1">
    <property type="nucleotide sequence ID" value="NZ_WPGW01000189.1"/>
</dbReference>
<dbReference type="SMR" id="P0ABJ8"/>
<dbReference type="STRING" id="198214.SF0370"/>
<dbReference type="PaxDb" id="198214-SF0370"/>
<dbReference type="GeneID" id="1027659"/>
<dbReference type="KEGG" id="sfl:SF0370"/>
<dbReference type="KEGG" id="sfx:S0375"/>
<dbReference type="PATRIC" id="fig|198214.7.peg.425"/>
<dbReference type="HOGENOM" id="CLU_140945_1_0_6"/>
<dbReference type="Proteomes" id="UP000001006">
    <property type="component" value="Chromosome"/>
</dbReference>
<dbReference type="Proteomes" id="UP000002673">
    <property type="component" value="Chromosome"/>
</dbReference>
<dbReference type="GO" id="GO:0009319">
    <property type="term" value="C:cytochrome o ubiquinol oxidase complex"/>
    <property type="evidence" value="ECO:0007669"/>
    <property type="project" value="TreeGrafter"/>
</dbReference>
<dbReference type="GO" id="GO:0005886">
    <property type="term" value="C:plasma membrane"/>
    <property type="evidence" value="ECO:0007669"/>
    <property type="project" value="UniProtKB-SubCell"/>
</dbReference>
<dbReference type="GO" id="GO:0009486">
    <property type="term" value="F:cytochrome bo3 ubiquinol oxidase activity"/>
    <property type="evidence" value="ECO:0007669"/>
    <property type="project" value="InterPro"/>
</dbReference>
<dbReference type="GO" id="GO:0015078">
    <property type="term" value="F:proton transmembrane transporter activity"/>
    <property type="evidence" value="ECO:0007669"/>
    <property type="project" value="TreeGrafter"/>
</dbReference>
<dbReference type="GO" id="GO:0019646">
    <property type="term" value="P:aerobic electron transport chain"/>
    <property type="evidence" value="ECO:0007669"/>
    <property type="project" value="TreeGrafter"/>
</dbReference>
<dbReference type="GO" id="GO:0015990">
    <property type="term" value="P:electron transport coupled proton transport"/>
    <property type="evidence" value="ECO:0007669"/>
    <property type="project" value="InterPro"/>
</dbReference>
<dbReference type="InterPro" id="IPR005171">
    <property type="entry name" value="Cyt_c_oxidase_su4_prok"/>
</dbReference>
<dbReference type="InterPro" id="IPR014210">
    <property type="entry name" value="Cyt_o_ubiqinol_oxidase_su4"/>
</dbReference>
<dbReference type="InterPro" id="IPR050968">
    <property type="entry name" value="Cytochrome_c_oxidase_bac_sub4"/>
</dbReference>
<dbReference type="NCBIfam" id="TIGR02847">
    <property type="entry name" value="CyoD"/>
    <property type="match status" value="1"/>
</dbReference>
<dbReference type="NCBIfam" id="NF007878">
    <property type="entry name" value="PRK10582.1"/>
    <property type="match status" value="1"/>
</dbReference>
<dbReference type="PANTHER" id="PTHR36835">
    <property type="entry name" value="CYTOCHROME BO(3) UBIQUINOL OXIDASE SUBUNIT 4"/>
    <property type="match status" value="1"/>
</dbReference>
<dbReference type="PANTHER" id="PTHR36835:SF1">
    <property type="entry name" value="CYTOCHROME BO(3) UBIQUINOL OXIDASE SUBUNIT 4"/>
    <property type="match status" value="1"/>
</dbReference>
<dbReference type="Pfam" id="PF03626">
    <property type="entry name" value="COX4_pro"/>
    <property type="match status" value="1"/>
</dbReference>
<proteinExistence type="inferred from homology"/>
<name>CYOD_SHIFL</name>
<evidence type="ECO:0000250" key="1"/>
<evidence type="ECO:0000305" key="2"/>
<accession>P0ABJ8</accession>
<accession>P18403</accession>
<accession>P77116</accession>
<comment type="function">
    <text evidence="1">Cytochrome bo(3) ubiquinol terminal oxidase is the component of the aerobic respiratory chain of E.coli that predominates when cells are grown at high aeration. Has proton pump activity across the membrane in addition to electron transfer, pumping 2 protons/electron (By similarity).</text>
</comment>
<comment type="subunit">
    <text evidence="1">Heterooctamer of two A chains, two B chains, two C chains and two D chains.</text>
</comment>
<comment type="subcellular location">
    <subcellularLocation>
        <location evidence="1">Cell inner membrane</location>
        <topology evidence="1">Multi-pass membrane protein</topology>
    </subcellularLocation>
</comment>
<comment type="similarity">
    <text evidence="2">Belongs to the cytochrome c oxidase bacterial subunit 4 family.</text>
</comment>
<keyword id="KW-0997">Cell inner membrane</keyword>
<keyword id="KW-1003">Cell membrane</keyword>
<keyword id="KW-0249">Electron transport</keyword>
<keyword id="KW-0472">Membrane</keyword>
<keyword id="KW-0560">Oxidoreductase</keyword>
<keyword id="KW-1185">Reference proteome</keyword>
<keyword id="KW-0812">Transmembrane</keyword>
<keyword id="KW-1133">Transmembrane helix</keyword>
<keyword id="KW-0813">Transport</keyword>
<organism>
    <name type="scientific">Shigella flexneri</name>
    <dbReference type="NCBI Taxonomy" id="623"/>
    <lineage>
        <taxon>Bacteria</taxon>
        <taxon>Pseudomonadati</taxon>
        <taxon>Pseudomonadota</taxon>
        <taxon>Gammaproteobacteria</taxon>
        <taxon>Enterobacterales</taxon>
        <taxon>Enterobacteriaceae</taxon>
        <taxon>Shigella</taxon>
    </lineage>
</organism>
<reference key="1">
    <citation type="journal article" date="2002" name="Nucleic Acids Res.">
        <title>Genome sequence of Shigella flexneri 2a: insights into pathogenicity through comparison with genomes of Escherichia coli K12 and O157.</title>
        <authorList>
            <person name="Jin Q."/>
            <person name="Yuan Z."/>
            <person name="Xu J."/>
            <person name="Wang Y."/>
            <person name="Shen Y."/>
            <person name="Lu W."/>
            <person name="Wang J."/>
            <person name="Liu H."/>
            <person name="Yang J."/>
            <person name="Yang F."/>
            <person name="Zhang X."/>
            <person name="Zhang J."/>
            <person name="Yang G."/>
            <person name="Wu H."/>
            <person name="Qu D."/>
            <person name="Dong J."/>
            <person name="Sun L."/>
            <person name="Xue Y."/>
            <person name="Zhao A."/>
            <person name="Gao Y."/>
            <person name="Zhu J."/>
            <person name="Kan B."/>
            <person name="Ding K."/>
            <person name="Chen S."/>
            <person name="Cheng H."/>
            <person name="Yao Z."/>
            <person name="He B."/>
            <person name="Chen R."/>
            <person name="Ma D."/>
            <person name="Qiang B."/>
            <person name="Wen Y."/>
            <person name="Hou Y."/>
            <person name="Yu J."/>
        </authorList>
    </citation>
    <scope>NUCLEOTIDE SEQUENCE [LARGE SCALE GENOMIC DNA]</scope>
    <source>
        <strain>301 / Serotype 2a</strain>
    </source>
</reference>
<reference key="2">
    <citation type="journal article" date="2003" name="Infect. Immun.">
        <title>Complete genome sequence and comparative genomics of Shigella flexneri serotype 2a strain 2457T.</title>
        <authorList>
            <person name="Wei J."/>
            <person name="Goldberg M.B."/>
            <person name="Burland V."/>
            <person name="Venkatesan M.M."/>
            <person name="Deng W."/>
            <person name="Fournier G."/>
            <person name="Mayhew G.F."/>
            <person name="Plunkett G. III"/>
            <person name="Rose D.J."/>
            <person name="Darling A."/>
            <person name="Mau B."/>
            <person name="Perna N.T."/>
            <person name="Payne S.M."/>
            <person name="Runyen-Janecky L.J."/>
            <person name="Zhou S."/>
            <person name="Schwartz D.C."/>
            <person name="Blattner F.R."/>
        </authorList>
    </citation>
    <scope>NUCLEOTIDE SEQUENCE [LARGE SCALE GENOMIC DNA]</scope>
    <source>
        <strain>ATCC 700930 / 2457T / Serotype 2a</strain>
    </source>
</reference>
<gene>
    <name type="primary">cyoD</name>
    <name type="ordered locus">SF0370</name>
    <name type="ordered locus">S0375</name>
</gene>
<protein>
    <recommendedName>
        <fullName>Cytochrome bo(3) ubiquinol oxidase subunit 4</fullName>
    </recommendedName>
    <alternativeName>
        <fullName>Cytochrome o ubiquinol oxidase subunit 4</fullName>
        <shortName>Cytochrome o subunit 4</shortName>
    </alternativeName>
    <alternativeName>
        <fullName>Oxidase bo(3) subunit 4</fullName>
    </alternativeName>
    <alternativeName>
        <fullName>Ubiquinol oxidase chain D</fullName>
    </alternativeName>
    <alternativeName>
        <fullName>Ubiquinol oxidase polypeptide IV</fullName>
    </alternativeName>
    <alternativeName>
        <fullName>Ubiquinol oxidase subunit 4</fullName>
    </alternativeName>
</protein>